<protein>
    <recommendedName>
        <fullName evidence="8">Thymocyte selection-associated high mobility group box protein TOX</fullName>
    </recommendedName>
    <alternativeName>
        <fullName evidence="8">Thymus high mobility group box protein TOX</fullName>
    </alternativeName>
</protein>
<organism>
    <name type="scientific">Homo sapiens</name>
    <name type="common">Human</name>
    <dbReference type="NCBI Taxonomy" id="9606"/>
    <lineage>
        <taxon>Eukaryota</taxon>
        <taxon>Metazoa</taxon>
        <taxon>Chordata</taxon>
        <taxon>Craniata</taxon>
        <taxon>Vertebrata</taxon>
        <taxon>Euteleostomi</taxon>
        <taxon>Mammalia</taxon>
        <taxon>Eutheria</taxon>
        <taxon>Euarchontoglires</taxon>
        <taxon>Primates</taxon>
        <taxon>Haplorrhini</taxon>
        <taxon>Catarrhini</taxon>
        <taxon>Hominidae</taxon>
        <taxon>Homo</taxon>
    </lineage>
</organism>
<dbReference type="EMBL" id="AB018351">
    <property type="protein sequence ID" value="BAA34528.2"/>
    <property type="status" value="ALT_INIT"/>
    <property type="molecule type" value="mRNA"/>
</dbReference>
<dbReference type="EMBL" id="BC016665">
    <property type="protein sequence ID" value="AAH16665.1"/>
    <property type="molecule type" value="mRNA"/>
</dbReference>
<dbReference type="CCDS" id="CCDS34897.1"/>
<dbReference type="RefSeq" id="NP_055544.1">
    <property type="nucleotide sequence ID" value="NM_014729.3"/>
</dbReference>
<dbReference type="BMRB" id="O94900"/>
<dbReference type="SMR" id="O94900"/>
<dbReference type="BioGRID" id="115107">
    <property type="interactions" value="13"/>
</dbReference>
<dbReference type="FunCoup" id="O94900">
    <property type="interactions" value="1531"/>
</dbReference>
<dbReference type="IntAct" id="O94900">
    <property type="interactions" value="8"/>
</dbReference>
<dbReference type="STRING" id="9606.ENSP00000354842"/>
<dbReference type="BindingDB" id="O94900"/>
<dbReference type="GlyCosmos" id="O94900">
    <property type="glycosylation" value="1 site, 1 glycan"/>
</dbReference>
<dbReference type="GlyGen" id="O94900">
    <property type="glycosylation" value="5 sites, 1 O-linked glycan (3 sites)"/>
</dbReference>
<dbReference type="iPTMnet" id="O94900"/>
<dbReference type="PhosphoSitePlus" id="O94900"/>
<dbReference type="BioMuta" id="TOX"/>
<dbReference type="jPOST" id="O94900"/>
<dbReference type="MassIVE" id="O94900"/>
<dbReference type="PaxDb" id="9606-ENSP00000354842"/>
<dbReference type="PeptideAtlas" id="O94900"/>
<dbReference type="ProteomicsDB" id="50531"/>
<dbReference type="TopDownProteomics" id="O94900"/>
<dbReference type="Antibodypedia" id="11831">
    <property type="antibodies" value="156 antibodies from 31 providers"/>
</dbReference>
<dbReference type="DNASU" id="9760"/>
<dbReference type="Ensembl" id="ENST00000361421.2">
    <property type="protein sequence ID" value="ENSP00000354842.1"/>
    <property type="gene ID" value="ENSG00000198846.6"/>
</dbReference>
<dbReference type="GeneID" id="9760"/>
<dbReference type="KEGG" id="hsa:9760"/>
<dbReference type="MANE-Select" id="ENST00000361421.2">
    <property type="protein sequence ID" value="ENSP00000354842.1"/>
    <property type="RefSeq nucleotide sequence ID" value="NM_014729.3"/>
    <property type="RefSeq protein sequence ID" value="NP_055544.1"/>
</dbReference>
<dbReference type="UCSC" id="uc003xtw.1">
    <property type="organism name" value="human"/>
</dbReference>
<dbReference type="AGR" id="HGNC:18988"/>
<dbReference type="CTD" id="9760"/>
<dbReference type="DisGeNET" id="9760"/>
<dbReference type="GeneCards" id="TOX"/>
<dbReference type="HGNC" id="HGNC:18988">
    <property type="gene designation" value="TOX"/>
</dbReference>
<dbReference type="HPA" id="ENSG00000198846">
    <property type="expression patterns" value="Tissue enriched (lymphoid)"/>
</dbReference>
<dbReference type="MIM" id="606863">
    <property type="type" value="gene"/>
</dbReference>
<dbReference type="neXtProt" id="NX_O94900"/>
<dbReference type="OpenTargets" id="ENSG00000198846"/>
<dbReference type="PharmGKB" id="PA162406704"/>
<dbReference type="VEuPathDB" id="HostDB:ENSG00000198846"/>
<dbReference type="eggNOG" id="KOG0381">
    <property type="taxonomic scope" value="Eukaryota"/>
</dbReference>
<dbReference type="GeneTree" id="ENSGT00940000159497"/>
<dbReference type="HOGENOM" id="CLU_030650_2_0_1"/>
<dbReference type="InParanoid" id="O94900"/>
<dbReference type="OMA" id="QPGMSPH"/>
<dbReference type="OrthoDB" id="10027956at2759"/>
<dbReference type="PAN-GO" id="O94900">
    <property type="GO annotations" value="4 GO annotations based on evolutionary models"/>
</dbReference>
<dbReference type="PhylomeDB" id="O94900"/>
<dbReference type="TreeFam" id="TF106481"/>
<dbReference type="PathwayCommons" id="O94900"/>
<dbReference type="SignaLink" id="O94900"/>
<dbReference type="BioGRID-ORCS" id="9760">
    <property type="hits" value="13 hits in 1169 CRISPR screens"/>
</dbReference>
<dbReference type="ChiTaRS" id="TOX">
    <property type="organism name" value="human"/>
</dbReference>
<dbReference type="GeneWiki" id="TOX"/>
<dbReference type="GenomeRNAi" id="9760"/>
<dbReference type="Pharos" id="O94900">
    <property type="development level" value="Tbio"/>
</dbReference>
<dbReference type="PRO" id="PR:O94900"/>
<dbReference type="Proteomes" id="UP000005640">
    <property type="component" value="Chromosome 8"/>
</dbReference>
<dbReference type="RNAct" id="O94900">
    <property type="molecule type" value="protein"/>
</dbReference>
<dbReference type="Bgee" id="ENSG00000198846">
    <property type="expression patterns" value="Expressed in cortical plate and 159 other cell types or tissues"/>
</dbReference>
<dbReference type="GO" id="GO:0005634">
    <property type="term" value="C:nucleus"/>
    <property type="evidence" value="ECO:0000250"/>
    <property type="project" value="UniProtKB"/>
</dbReference>
<dbReference type="GO" id="GO:0031490">
    <property type="term" value="F:chromatin DNA binding"/>
    <property type="evidence" value="ECO:0000250"/>
    <property type="project" value="UniProtKB"/>
</dbReference>
<dbReference type="GO" id="GO:0043373">
    <property type="term" value="P:CD4-positive, alpha-beta T cell lineage commitment"/>
    <property type="evidence" value="ECO:0000250"/>
    <property type="project" value="UniProtKB"/>
</dbReference>
<dbReference type="GO" id="GO:0002362">
    <property type="term" value="P:CD4-positive, CD25-positive, alpha-beta regulatory T cell lineage commitment"/>
    <property type="evidence" value="ECO:0000250"/>
    <property type="project" value="UniProtKB"/>
</dbReference>
<dbReference type="GO" id="GO:0043375">
    <property type="term" value="P:CD8-positive, alpha-beta T cell lineage commitment"/>
    <property type="evidence" value="ECO:0000250"/>
    <property type="project" value="UniProtKB"/>
</dbReference>
<dbReference type="GO" id="GO:0021895">
    <property type="term" value="P:cerebral cortex neuron differentiation"/>
    <property type="evidence" value="ECO:0000250"/>
    <property type="project" value="UniProtKB"/>
</dbReference>
<dbReference type="GO" id="GO:0006325">
    <property type="term" value="P:chromatin organization"/>
    <property type="evidence" value="ECO:0007669"/>
    <property type="project" value="UniProtKB-KW"/>
</dbReference>
<dbReference type="GO" id="GO:0002521">
    <property type="term" value="P:leukocyte differentiation"/>
    <property type="evidence" value="ECO:0000318"/>
    <property type="project" value="GO_Central"/>
</dbReference>
<dbReference type="GO" id="GO:0048535">
    <property type="term" value="P:lymph node development"/>
    <property type="evidence" value="ECO:0007669"/>
    <property type="project" value="Ensembl"/>
</dbReference>
<dbReference type="GO" id="GO:0001779">
    <property type="term" value="P:natural killer cell differentiation"/>
    <property type="evidence" value="ECO:0000315"/>
    <property type="project" value="UniProtKB"/>
</dbReference>
<dbReference type="GO" id="GO:0002364">
    <property type="term" value="P:NK T cell lineage commitment"/>
    <property type="evidence" value="ECO:0000250"/>
    <property type="project" value="UniProtKB"/>
</dbReference>
<dbReference type="GO" id="GO:0048541">
    <property type="term" value="P:Peyer's patch development"/>
    <property type="evidence" value="ECO:0007669"/>
    <property type="project" value="Ensembl"/>
</dbReference>
<dbReference type="GO" id="GO:0032825">
    <property type="term" value="P:positive regulation of natural killer cell differentiation"/>
    <property type="evidence" value="ECO:0007669"/>
    <property type="project" value="Ensembl"/>
</dbReference>
<dbReference type="GO" id="GO:2000179">
    <property type="term" value="P:positive regulation of neural precursor cell proliferation"/>
    <property type="evidence" value="ECO:0000250"/>
    <property type="project" value="UniProtKB"/>
</dbReference>
<dbReference type="GO" id="GO:0010976">
    <property type="term" value="P:positive regulation of neuron projection development"/>
    <property type="evidence" value="ECO:0000250"/>
    <property type="project" value="UniProtKB"/>
</dbReference>
<dbReference type="GO" id="GO:0045944">
    <property type="term" value="P:positive regulation of transcription by RNA polymerase II"/>
    <property type="evidence" value="ECO:0000250"/>
    <property type="project" value="UniProtKB"/>
</dbReference>
<dbReference type="GO" id="GO:1902232">
    <property type="term" value="P:regulation of positive thymic T cell selection"/>
    <property type="evidence" value="ECO:0000250"/>
    <property type="project" value="UniProtKB"/>
</dbReference>
<dbReference type="GO" id="GO:0006357">
    <property type="term" value="P:regulation of transcription by RNA polymerase II"/>
    <property type="evidence" value="ECO:0000318"/>
    <property type="project" value="GO_Central"/>
</dbReference>
<dbReference type="CDD" id="cd21995">
    <property type="entry name" value="HMG-box_TOX-like"/>
    <property type="match status" value="1"/>
</dbReference>
<dbReference type="FunFam" id="1.10.30.10:FF:000005">
    <property type="entry name" value="TOX high mobility group box family member 3"/>
    <property type="match status" value="1"/>
</dbReference>
<dbReference type="Gene3D" id="1.10.30.10">
    <property type="entry name" value="High mobility group box domain"/>
    <property type="match status" value="1"/>
</dbReference>
<dbReference type="InterPro" id="IPR009071">
    <property type="entry name" value="HMG_box_dom"/>
</dbReference>
<dbReference type="InterPro" id="IPR036910">
    <property type="entry name" value="HMG_box_dom_sf"/>
</dbReference>
<dbReference type="InterPro" id="IPR051365">
    <property type="entry name" value="TOX_HMG-box_domain"/>
</dbReference>
<dbReference type="PANTHER" id="PTHR45781">
    <property type="entry name" value="AGAP000281-PA"/>
    <property type="match status" value="1"/>
</dbReference>
<dbReference type="PANTHER" id="PTHR45781:SF4">
    <property type="entry name" value="THYMOCYTE SELECTION-ASSOCIATED HIGH MOBILITY GROUP BOX PROTEIN TOX"/>
    <property type="match status" value="1"/>
</dbReference>
<dbReference type="Pfam" id="PF00505">
    <property type="entry name" value="HMG_box"/>
    <property type="match status" value="1"/>
</dbReference>
<dbReference type="PRINTS" id="PR00886">
    <property type="entry name" value="HIGHMOBLTY12"/>
</dbReference>
<dbReference type="SMART" id="SM00398">
    <property type="entry name" value="HMG"/>
    <property type="match status" value="1"/>
</dbReference>
<dbReference type="SUPFAM" id="SSF47095">
    <property type="entry name" value="HMG-box"/>
    <property type="match status" value="1"/>
</dbReference>
<dbReference type="PROSITE" id="PS50118">
    <property type="entry name" value="HMG_BOX_2"/>
    <property type="match status" value="1"/>
</dbReference>
<keyword id="KW-0156">Chromatin regulator</keyword>
<keyword id="KW-0238">DNA-binding</keyword>
<keyword id="KW-0524">Neurogenesis</keyword>
<keyword id="KW-0539">Nucleus</keyword>
<keyword id="KW-1267">Proteomics identification</keyword>
<keyword id="KW-1185">Reference proteome</keyword>
<keyword id="KW-0804">Transcription</keyword>
<keyword id="KW-0805">Transcription regulation</keyword>
<feature type="chain" id="PRO_0000244569" description="Thymocyte selection-associated high mobility group box protein TOX">
    <location>
        <begin position="1"/>
        <end position="526"/>
    </location>
</feature>
<feature type="DNA-binding region" description="HMG box" evidence="3">
    <location>
        <begin position="261"/>
        <end position="329"/>
    </location>
</feature>
<feature type="region of interest" description="Disordered" evidence="4">
    <location>
        <begin position="138"/>
        <end position="178"/>
    </location>
</feature>
<feature type="region of interest" description="Disordered" evidence="4">
    <location>
        <begin position="192"/>
        <end position="264"/>
    </location>
</feature>
<feature type="short sequence motif" description="Nuclear localization signal" evidence="2">
    <location>
        <begin position="237"/>
        <end position="256"/>
    </location>
</feature>
<feature type="compositionally biased region" description="Polar residues" evidence="4">
    <location>
        <begin position="192"/>
        <end position="203"/>
    </location>
</feature>
<feature type="compositionally biased region" description="Low complexity" evidence="4">
    <location>
        <begin position="209"/>
        <end position="220"/>
    </location>
</feature>
<feature type="compositionally biased region" description="Basic and acidic residues" evidence="4">
    <location>
        <begin position="228"/>
        <end position="245"/>
    </location>
</feature>
<feature type="compositionally biased region" description="Basic residues" evidence="4">
    <location>
        <begin position="246"/>
        <end position="256"/>
    </location>
</feature>
<feature type="sequence variant" id="VAR_064759" description="Found in a renal cell carcinoma sample; somatic mutation." evidence="6">
    <original>A</original>
    <variation>T</variation>
    <location>
        <position position="267"/>
    </location>
</feature>
<feature type="sequence conflict" description="In Ref. 3; AAH16665." evidence="9" ref="3">
    <original>P</original>
    <variation>V</variation>
    <location>
        <position position="9"/>
    </location>
</feature>
<name>TOX_HUMAN</name>
<gene>
    <name evidence="8 10" type="primary">TOX</name>
    <name type="synonym">KIAA0808</name>
</gene>
<accession>O94900</accession>
<accession>Q96AV5</accession>
<sequence length="526" mass="57513">MDVRFYPPPAQPAAAPDAPCLGPSPCLDPYYCNKFDGENMYMSMTEPSQDYVPASQSYPGPSLESEDFNIPPITPPSLPDHSLVHLNEVESGYHSLCHPMNHNGLLPFHPQNMDLPEITVSNMLGQDGTLLSNSISVMPDIRNPEGTQYSSHPQMAAMRPRGQPADIRQQPGMMPHGQLTTINQSQLSAQLGLNMGGSNVPHNSPSPPGSKSATPSPSSSVHEDEGDDTSKINGGEKRPASDMGKKPKTPKKKKKKDPNEPQKPVSAYALFFRDTQAAIKGQNPNATFGEVSKIVASMWDGLGEEQKQVYKKKTEAAKKEYLKQLAAYRASLVSKSYSEPVDVKTSQPPQLINSKPSVFHGPSQAHSALYLSSHYHQQPGMNPHLTAMHPSLPRNIAPKPNNQMPVTVSIANMAVSPPPPLQISPPLHQHLNMQQHQPLTMQQPLGNQLPMQVQSALHSPTMQQGFTLQPDYQTIINPTSTAAQVVTQAMEYVRSGCRNPPPQPVDWNNDYCSSGGMQRDKALYLT</sequence>
<proteinExistence type="evidence at protein level"/>
<comment type="function">
    <text evidence="1 5">Transcriptional regulator with a major role in neural stem cell commitment and corticogenesis as well as in lymphoid cell development and lymphoid tissue organogenesis (By similarity). Binds to GC-rich DNA sequences in the proximity of transcription start sites and may alter chromatin structure, modifying access of transcription factors to DNA. During cortical development, controls the neural stem cell pool by inhibiting the switch from proliferative to differentiating progenitors. Beyond progenitor cells, promotes neurite outgrowth in newborn neurons migrating to reach the cortical plate. May activate or repress critical genes for neural stem cell fate such as SOX2, EOMES and ROBO2 (By similarity). Plays an essential role in the development of lymphoid tissue-inducer (LTi) cells, a subset necessary for the formation of secondary lymphoid organs: peripheral lymph nodes and Peyer's patches. Acts as a developmental checkpoint and regulates thymocyte positive selection toward T cell lineage commitment. Required for the development of various T cell subsets, including CD4-positive helper T cells, CD8-positive cytotoxic T cells, regulatory T cells and CD1D-dependent natural killer T (NKT) cells. Required for the differentiation of common lymphoid progenitors (CMP) to innate lymphoid cells (ILC) (By similarity). May regulate the NOTCH-mediated gene program, promoting differentiation of the ILC lineage. Required at the progenitor phase of NK cell development in the bone marrow to specify NK cell lineage commitment (By similarity) (PubMed:21126536). Upon chronic antigen stimulation, diverts T cell development by promoting the generation of exhaustive T cells, while suppressing effector and memory T cell programming. May regulate the expression of genes encoding inhibitory receptors such as PDCD1 and induce the exhaustion program, to prevent the overstimulation of T cells and activation-induced cell death (By similarity).</text>
</comment>
<comment type="subunit">
    <text evidence="1">Interacts with HBO1 complex composed at least of KAT7/HBO1, ING4, MEAF6, and JADE2; this complex is involved in histone acetylation. Interacts with DNMT1, LEO1, PAF1, SAP130 and SIN3A; these interactors regulate chromatin remodeling. Interacts with an array of proteins involved in RNA processing and translation and DNA replication.</text>
</comment>
<comment type="interaction">
    <interactant intactId="EBI-9088321">
        <id>O94900</id>
    </interactant>
    <interactant intactId="EBI-11524452">
        <id>Q8N9N5-2</id>
        <label>BANP</label>
    </interactant>
    <organismsDiffer>false</organismsDiffer>
    <experiments>3</experiments>
</comment>
<comment type="interaction">
    <interactant intactId="EBI-9088321">
        <id>O94900</id>
    </interactant>
    <interactant intactId="EBI-954466">
        <id>Q96MA1</id>
        <label>DMRTB1</label>
    </interactant>
    <organismsDiffer>false</organismsDiffer>
    <experiments>3</experiments>
</comment>
<comment type="interaction">
    <interactant intactId="EBI-9088321">
        <id>O94900</id>
    </interactant>
    <interactant intactId="EBI-2847510">
        <id>Q13588</id>
        <label>GRAP</label>
    </interactant>
    <organismsDiffer>false</organismsDiffer>
    <experiments>3</experiments>
</comment>
<comment type="interaction">
    <interactant intactId="EBI-9088321">
        <id>O94900</id>
    </interactant>
    <interactant intactId="EBI-2432309">
        <id>Q92876</id>
        <label>KLK6</label>
    </interactant>
    <organismsDiffer>false</organismsDiffer>
    <experiments>3</experiments>
</comment>
<comment type="interaction">
    <interactant intactId="EBI-9088321">
        <id>O94900</id>
    </interactant>
    <interactant intactId="EBI-10210845">
        <id>P59990</id>
        <label>KRTAP12-1</label>
    </interactant>
    <organismsDiffer>false</organismsDiffer>
    <experiments>3</experiments>
</comment>
<comment type="interaction">
    <interactant intactId="EBI-9088321">
        <id>O94900</id>
    </interactant>
    <interactant intactId="EBI-3957672">
        <id>Q6PEX3</id>
        <label>KRTAP26-1</label>
    </interactant>
    <organismsDiffer>false</organismsDiffer>
    <experiments>3</experiments>
</comment>
<comment type="subcellular location">
    <subcellularLocation>
        <location evidence="3">Nucleus</location>
    </subcellularLocation>
</comment>
<comment type="tissue specificity">
    <text evidence="5 7">Expressed in NK cells (PubMed:21126536). Highly expressed in tumor-infiltrating CD8-positive T cells (at protein level) (PubMed:31207604).</text>
</comment>
<comment type="induction">
    <text evidence="5">Up-regulated during differentiation of NK cells from CD34-positive hematopoietic cells in the presence of IL15. Down-regulated in mature NK cells.</text>
</comment>
<comment type="similarity">
    <text evidence="9">Belongs to the high motility group (HMG) box superfamily.</text>
</comment>
<comment type="sequence caution" evidence="9">
    <conflict type="erroneous initiation">
        <sequence resource="EMBL-CDS" id="BAA34528"/>
    </conflict>
    <text>Truncated N-terminus.</text>
</comment>
<reference key="1">
    <citation type="journal article" date="1998" name="DNA Res.">
        <title>Prediction of the coding sequences of unidentified human genes. XI. The complete sequences of 100 new cDNA clones from brain which code for large proteins in vitro.</title>
        <authorList>
            <person name="Nagase T."/>
            <person name="Ishikawa K."/>
            <person name="Suyama M."/>
            <person name="Kikuno R."/>
            <person name="Miyajima N."/>
            <person name="Tanaka A."/>
            <person name="Kotani H."/>
            <person name="Nomura N."/>
            <person name="Ohara O."/>
        </authorList>
    </citation>
    <scope>NUCLEOTIDE SEQUENCE [LARGE SCALE MRNA]</scope>
    <source>
        <tissue>Brain</tissue>
    </source>
</reference>
<reference key="2">
    <citation type="journal article" date="2002" name="DNA Res.">
        <title>Construction of expression-ready cDNA clones for KIAA genes: manual curation of 330 KIAA cDNA clones.</title>
        <authorList>
            <person name="Nakajima D."/>
            <person name="Okazaki N."/>
            <person name="Yamakawa H."/>
            <person name="Kikuno R."/>
            <person name="Ohara O."/>
            <person name="Nagase T."/>
        </authorList>
    </citation>
    <scope>SEQUENCE REVISION</scope>
</reference>
<reference key="3">
    <citation type="journal article" date="2004" name="Genome Res.">
        <title>The status, quality, and expansion of the NIH full-length cDNA project: the Mammalian Gene Collection (MGC).</title>
        <authorList>
            <consortium name="The MGC Project Team"/>
        </authorList>
    </citation>
    <scope>NUCLEOTIDE SEQUENCE [LARGE SCALE MRNA]</scope>
    <source>
        <tissue>Lymph</tissue>
    </source>
</reference>
<reference key="4">
    <citation type="journal article" date="2011" name="Nature">
        <title>Exome sequencing identifies frequent mutation of the SWI/SNF complex gene PBRM1 in renal carcinoma.</title>
        <authorList>
            <person name="Varela I."/>
            <person name="Tarpey P."/>
            <person name="Raine K."/>
            <person name="Huang D."/>
            <person name="Ong C.K."/>
            <person name="Stephens P."/>
            <person name="Davies H."/>
            <person name="Jones D."/>
            <person name="Lin M.L."/>
            <person name="Teague J."/>
            <person name="Bignell G."/>
            <person name="Butler A."/>
            <person name="Cho J."/>
            <person name="Dalgliesh G.L."/>
            <person name="Galappaththige D."/>
            <person name="Greenman C."/>
            <person name="Hardy C."/>
            <person name="Jia M."/>
            <person name="Latimer C."/>
            <person name="Lau K.W."/>
            <person name="Marshall J."/>
            <person name="McLaren S."/>
            <person name="Menzies A."/>
            <person name="Mudie L."/>
            <person name="Stebbings L."/>
            <person name="Largaespada D.A."/>
            <person name="Wessels L.F.A."/>
            <person name="Richard S."/>
            <person name="Kahnoski R.J."/>
            <person name="Anema J."/>
            <person name="Tuveson D.A."/>
            <person name="Perez-Mancera P.A."/>
            <person name="Mustonen V."/>
            <person name="Fischer A."/>
            <person name="Adams D.J."/>
            <person name="Rust A."/>
            <person name="Chan-On W."/>
            <person name="Subimerb C."/>
            <person name="Dykema K."/>
            <person name="Furge K."/>
            <person name="Campbell P.J."/>
            <person name="Teh B.T."/>
            <person name="Stratton M.R."/>
            <person name="Futreal P.A."/>
        </authorList>
    </citation>
    <scope>VARIANT THR-267</scope>
</reference>
<reference key="5">
    <citation type="journal article" date="2011" name="Immunol. Lett.">
        <title>TOX regulates the differentiation of human natural killer cells from hematopoietic stem cells in vitro.</title>
        <authorList>
            <person name="Yun S."/>
            <person name="Lee S.H."/>
            <person name="Yoon S.R."/>
            <person name="Kim M.S."/>
            <person name="Piao Z.H."/>
            <person name="Myung P.K."/>
            <person name="Kim T.D."/>
            <person name="Jung H."/>
            <person name="Choi I."/>
        </authorList>
    </citation>
    <scope>FUNCTION</scope>
    <scope>INDUCTION</scope>
    <scope>TISSUE SPECIFICITY</scope>
</reference>
<reference key="6">
    <citation type="journal article" date="2019" name="Nature">
        <title>TOX is a critical regulator of tumour-specific T cell differentiation.</title>
        <authorList>
            <person name="Scott A.C."/>
            <person name="Duendar F."/>
            <person name="Zumbo P."/>
            <person name="Chandran S.S."/>
            <person name="Klebanoff C.A."/>
            <person name="Shakiba M."/>
            <person name="Trivedi P."/>
            <person name="Menocal L."/>
            <person name="Appleby H."/>
            <person name="Camara S."/>
            <person name="Zamarin D."/>
            <person name="Walther T."/>
            <person name="Snyder A."/>
            <person name="Femia M.R."/>
            <person name="Comen E.A."/>
            <person name="Wen H.Y."/>
            <person name="Hellmann M.D."/>
            <person name="Anandasabapathy N."/>
            <person name="Liu Y."/>
            <person name="Altorki N.K."/>
            <person name="Lauer P."/>
            <person name="Levy O."/>
            <person name="Glickman M.S."/>
            <person name="Kaye J."/>
            <person name="Betel D."/>
            <person name="Philip M."/>
            <person name="Schietinger A."/>
        </authorList>
    </citation>
    <scope>TISSUE SPECIFICITY</scope>
</reference>
<evidence type="ECO:0000250" key="1">
    <source>
        <dbReference type="UniProtKB" id="Q66JW3"/>
    </source>
</evidence>
<evidence type="ECO:0000255" key="2"/>
<evidence type="ECO:0000255" key="3">
    <source>
        <dbReference type="PROSITE-ProRule" id="PRU00267"/>
    </source>
</evidence>
<evidence type="ECO:0000256" key="4">
    <source>
        <dbReference type="SAM" id="MobiDB-lite"/>
    </source>
</evidence>
<evidence type="ECO:0000269" key="5">
    <source>
    </source>
</evidence>
<evidence type="ECO:0000269" key="6">
    <source>
    </source>
</evidence>
<evidence type="ECO:0000269" key="7">
    <source>
    </source>
</evidence>
<evidence type="ECO:0000303" key="8">
    <source>
    </source>
</evidence>
<evidence type="ECO:0000305" key="9"/>
<evidence type="ECO:0000312" key="10">
    <source>
        <dbReference type="HGNC" id="HGNC:18988"/>
    </source>
</evidence>